<reference key="1">
    <citation type="journal article" date="2007" name="BMC Microbiol.">
        <title>Subtle genetic changes enhance virulence of methicillin resistant and sensitive Staphylococcus aureus.</title>
        <authorList>
            <person name="Highlander S.K."/>
            <person name="Hulten K.G."/>
            <person name="Qin X."/>
            <person name="Jiang H."/>
            <person name="Yerrapragada S."/>
            <person name="Mason E.O. Jr."/>
            <person name="Shang Y."/>
            <person name="Williams T.M."/>
            <person name="Fortunov R.M."/>
            <person name="Liu Y."/>
            <person name="Igboeli O."/>
            <person name="Petrosino J."/>
            <person name="Tirumalai M."/>
            <person name="Uzman A."/>
            <person name="Fox G.E."/>
            <person name="Cardenas A.M."/>
            <person name="Muzny D.M."/>
            <person name="Hemphill L."/>
            <person name="Ding Y."/>
            <person name="Dugan S."/>
            <person name="Blyth P.R."/>
            <person name="Buhay C.J."/>
            <person name="Dinh H.H."/>
            <person name="Hawes A.C."/>
            <person name="Holder M."/>
            <person name="Kovar C.L."/>
            <person name="Lee S.L."/>
            <person name="Liu W."/>
            <person name="Nazareth L.V."/>
            <person name="Wang Q."/>
            <person name="Zhou J."/>
            <person name="Kaplan S.L."/>
            <person name="Weinstock G.M."/>
        </authorList>
    </citation>
    <scope>NUCLEOTIDE SEQUENCE [LARGE SCALE GENOMIC DNA]</scope>
    <source>
        <strain>USA300 / TCH1516</strain>
    </source>
</reference>
<protein>
    <recommendedName>
        <fullName evidence="1">Ribosome maturation factor RimP</fullName>
    </recommendedName>
</protein>
<name>RIMP_STAAT</name>
<dbReference type="EMBL" id="CP000730">
    <property type="protein sequence ID" value="ABX29211.1"/>
    <property type="molecule type" value="Genomic_DNA"/>
</dbReference>
<dbReference type="RefSeq" id="WP_000036631.1">
    <property type="nucleotide sequence ID" value="NC_010079.1"/>
</dbReference>
<dbReference type="SMR" id="A8Z3U5"/>
<dbReference type="KEGG" id="sax:USA300HOU_1197"/>
<dbReference type="HOGENOM" id="CLU_070525_2_0_9"/>
<dbReference type="GO" id="GO:0005829">
    <property type="term" value="C:cytosol"/>
    <property type="evidence" value="ECO:0007669"/>
    <property type="project" value="TreeGrafter"/>
</dbReference>
<dbReference type="GO" id="GO:0000028">
    <property type="term" value="P:ribosomal small subunit assembly"/>
    <property type="evidence" value="ECO:0007669"/>
    <property type="project" value="TreeGrafter"/>
</dbReference>
<dbReference type="GO" id="GO:0006412">
    <property type="term" value="P:translation"/>
    <property type="evidence" value="ECO:0007669"/>
    <property type="project" value="TreeGrafter"/>
</dbReference>
<dbReference type="CDD" id="cd01734">
    <property type="entry name" value="YlxS_C"/>
    <property type="match status" value="1"/>
</dbReference>
<dbReference type="FunFam" id="3.30.300.70:FF:000001">
    <property type="entry name" value="Ribosome maturation factor RimP"/>
    <property type="match status" value="1"/>
</dbReference>
<dbReference type="Gene3D" id="2.30.30.180">
    <property type="entry name" value="Ribosome maturation factor RimP, C-terminal domain"/>
    <property type="match status" value="1"/>
</dbReference>
<dbReference type="Gene3D" id="3.30.300.70">
    <property type="entry name" value="RimP-like superfamily, N-terminal"/>
    <property type="match status" value="1"/>
</dbReference>
<dbReference type="HAMAP" id="MF_01077">
    <property type="entry name" value="RimP"/>
    <property type="match status" value="1"/>
</dbReference>
<dbReference type="InterPro" id="IPR003728">
    <property type="entry name" value="Ribosome_maturation_RimP"/>
</dbReference>
<dbReference type="InterPro" id="IPR028998">
    <property type="entry name" value="RimP_C"/>
</dbReference>
<dbReference type="InterPro" id="IPR036847">
    <property type="entry name" value="RimP_C_sf"/>
</dbReference>
<dbReference type="InterPro" id="IPR028989">
    <property type="entry name" value="RimP_N"/>
</dbReference>
<dbReference type="InterPro" id="IPR035956">
    <property type="entry name" value="RimP_N_sf"/>
</dbReference>
<dbReference type="NCBIfam" id="NF000928">
    <property type="entry name" value="PRK00092.1-2"/>
    <property type="match status" value="1"/>
</dbReference>
<dbReference type="PANTHER" id="PTHR33867">
    <property type="entry name" value="RIBOSOME MATURATION FACTOR RIMP"/>
    <property type="match status" value="1"/>
</dbReference>
<dbReference type="PANTHER" id="PTHR33867:SF1">
    <property type="entry name" value="RIBOSOME MATURATION FACTOR RIMP"/>
    <property type="match status" value="1"/>
</dbReference>
<dbReference type="Pfam" id="PF17384">
    <property type="entry name" value="DUF150_C"/>
    <property type="match status" value="1"/>
</dbReference>
<dbReference type="Pfam" id="PF02576">
    <property type="entry name" value="RimP_N"/>
    <property type="match status" value="1"/>
</dbReference>
<dbReference type="SUPFAM" id="SSF74942">
    <property type="entry name" value="YhbC-like, C-terminal domain"/>
    <property type="match status" value="1"/>
</dbReference>
<dbReference type="SUPFAM" id="SSF75420">
    <property type="entry name" value="YhbC-like, N-terminal domain"/>
    <property type="match status" value="1"/>
</dbReference>
<proteinExistence type="inferred from homology"/>
<evidence type="ECO:0000255" key="1">
    <source>
        <dbReference type="HAMAP-Rule" id="MF_01077"/>
    </source>
</evidence>
<feature type="chain" id="PRO_1000084538" description="Ribosome maturation factor RimP">
    <location>
        <begin position="1"/>
        <end position="155"/>
    </location>
</feature>
<keyword id="KW-0963">Cytoplasm</keyword>
<keyword id="KW-0690">Ribosome biogenesis</keyword>
<accession>A8Z3U5</accession>
<sequence>MSKITEQVEVIVKPIMEDLNFELVDVEYVKEGRDHFLRISIDKEGGVDLNDCTLASEKISEAMDANDPIPEMYYLDVASPGAERPIKKEQDFQNAITKPVFVSLYVPIEGEKEWLGILQEVNNETIVVQVKIKARTKDIEIPRDKIAKARHAVMI</sequence>
<gene>
    <name evidence="1" type="primary">rimP</name>
    <name type="ordered locus">USA300HOU_1197</name>
</gene>
<organism>
    <name type="scientific">Staphylococcus aureus (strain USA300 / TCH1516)</name>
    <dbReference type="NCBI Taxonomy" id="451516"/>
    <lineage>
        <taxon>Bacteria</taxon>
        <taxon>Bacillati</taxon>
        <taxon>Bacillota</taxon>
        <taxon>Bacilli</taxon>
        <taxon>Bacillales</taxon>
        <taxon>Staphylococcaceae</taxon>
        <taxon>Staphylococcus</taxon>
    </lineage>
</organism>
<comment type="function">
    <text evidence="1">Required for maturation of 30S ribosomal subunits.</text>
</comment>
<comment type="subcellular location">
    <subcellularLocation>
        <location evidence="1">Cytoplasm</location>
    </subcellularLocation>
</comment>
<comment type="similarity">
    <text evidence="1">Belongs to the RimP family.</text>
</comment>